<organism>
    <name type="scientific">Haemophilus ducreyi (strain 35000HP / ATCC 700724)</name>
    <dbReference type="NCBI Taxonomy" id="233412"/>
    <lineage>
        <taxon>Bacteria</taxon>
        <taxon>Pseudomonadati</taxon>
        <taxon>Pseudomonadota</taxon>
        <taxon>Gammaproteobacteria</taxon>
        <taxon>Pasteurellales</taxon>
        <taxon>Pasteurellaceae</taxon>
        <taxon>Haemophilus</taxon>
    </lineage>
</organism>
<name>RL11_HAEDU</name>
<dbReference type="EMBL" id="AE017143">
    <property type="protein sequence ID" value="AAP96613.1"/>
    <property type="molecule type" value="Genomic_DNA"/>
</dbReference>
<dbReference type="EMBL" id="AF009342">
    <property type="protein sequence ID" value="AAB63583.1"/>
    <property type="molecule type" value="Genomic_DNA"/>
</dbReference>
<dbReference type="RefSeq" id="WP_005599211.1">
    <property type="nucleotide sequence ID" value="NC_002940.2"/>
</dbReference>
<dbReference type="SMR" id="O32613"/>
<dbReference type="STRING" id="233412.HD_1884"/>
<dbReference type="GeneID" id="92743718"/>
<dbReference type="KEGG" id="hdu:HD_1884"/>
<dbReference type="eggNOG" id="COG0080">
    <property type="taxonomic scope" value="Bacteria"/>
</dbReference>
<dbReference type="HOGENOM" id="CLU_074237_2_0_6"/>
<dbReference type="OrthoDB" id="9802408at2"/>
<dbReference type="Proteomes" id="UP000001022">
    <property type="component" value="Chromosome"/>
</dbReference>
<dbReference type="GO" id="GO:0022625">
    <property type="term" value="C:cytosolic large ribosomal subunit"/>
    <property type="evidence" value="ECO:0007669"/>
    <property type="project" value="TreeGrafter"/>
</dbReference>
<dbReference type="GO" id="GO:0070180">
    <property type="term" value="F:large ribosomal subunit rRNA binding"/>
    <property type="evidence" value="ECO:0007669"/>
    <property type="project" value="UniProtKB-UniRule"/>
</dbReference>
<dbReference type="GO" id="GO:0003735">
    <property type="term" value="F:structural constituent of ribosome"/>
    <property type="evidence" value="ECO:0007669"/>
    <property type="project" value="InterPro"/>
</dbReference>
<dbReference type="GO" id="GO:0006412">
    <property type="term" value="P:translation"/>
    <property type="evidence" value="ECO:0007669"/>
    <property type="project" value="UniProtKB-UniRule"/>
</dbReference>
<dbReference type="CDD" id="cd00349">
    <property type="entry name" value="Ribosomal_L11"/>
    <property type="match status" value="1"/>
</dbReference>
<dbReference type="FunFam" id="1.10.10.250:FF:000001">
    <property type="entry name" value="50S ribosomal protein L11"/>
    <property type="match status" value="1"/>
</dbReference>
<dbReference type="FunFam" id="3.30.1550.10:FF:000001">
    <property type="entry name" value="50S ribosomal protein L11"/>
    <property type="match status" value="1"/>
</dbReference>
<dbReference type="Gene3D" id="1.10.10.250">
    <property type="entry name" value="Ribosomal protein L11, C-terminal domain"/>
    <property type="match status" value="1"/>
</dbReference>
<dbReference type="Gene3D" id="3.30.1550.10">
    <property type="entry name" value="Ribosomal protein L11/L12, N-terminal domain"/>
    <property type="match status" value="1"/>
</dbReference>
<dbReference type="HAMAP" id="MF_00736">
    <property type="entry name" value="Ribosomal_uL11"/>
    <property type="match status" value="1"/>
</dbReference>
<dbReference type="InterPro" id="IPR000911">
    <property type="entry name" value="Ribosomal_uL11"/>
</dbReference>
<dbReference type="InterPro" id="IPR006519">
    <property type="entry name" value="Ribosomal_uL11_bac-typ"/>
</dbReference>
<dbReference type="InterPro" id="IPR020783">
    <property type="entry name" value="Ribosomal_uL11_C"/>
</dbReference>
<dbReference type="InterPro" id="IPR036769">
    <property type="entry name" value="Ribosomal_uL11_C_sf"/>
</dbReference>
<dbReference type="InterPro" id="IPR020784">
    <property type="entry name" value="Ribosomal_uL11_N"/>
</dbReference>
<dbReference type="InterPro" id="IPR036796">
    <property type="entry name" value="Ribosomal_uL11_N_sf"/>
</dbReference>
<dbReference type="NCBIfam" id="TIGR01632">
    <property type="entry name" value="L11_bact"/>
    <property type="match status" value="1"/>
</dbReference>
<dbReference type="PANTHER" id="PTHR11661">
    <property type="entry name" value="60S RIBOSOMAL PROTEIN L12"/>
    <property type="match status" value="1"/>
</dbReference>
<dbReference type="PANTHER" id="PTHR11661:SF1">
    <property type="entry name" value="LARGE RIBOSOMAL SUBUNIT PROTEIN UL11M"/>
    <property type="match status" value="1"/>
</dbReference>
<dbReference type="Pfam" id="PF00298">
    <property type="entry name" value="Ribosomal_L11"/>
    <property type="match status" value="1"/>
</dbReference>
<dbReference type="Pfam" id="PF03946">
    <property type="entry name" value="Ribosomal_L11_N"/>
    <property type="match status" value="1"/>
</dbReference>
<dbReference type="SMART" id="SM00649">
    <property type="entry name" value="RL11"/>
    <property type="match status" value="1"/>
</dbReference>
<dbReference type="SUPFAM" id="SSF54747">
    <property type="entry name" value="Ribosomal L11/L12e N-terminal domain"/>
    <property type="match status" value="1"/>
</dbReference>
<dbReference type="SUPFAM" id="SSF46906">
    <property type="entry name" value="Ribosomal protein L11, C-terminal domain"/>
    <property type="match status" value="1"/>
</dbReference>
<dbReference type="PROSITE" id="PS00359">
    <property type="entry name" value="RIBOSOMAL_L11"/>
    <property type="match status" value="1"/>
</dbReference>
<gene>
    <name evidence="2" type="primary">rplK</name>
    <name type="ordered locus">HD_1884</name>
</gene>
<keyword id="KW-0488">Methylation</keyword>
<keyword id="KW-1185">Reference proteome</keyword>
<keyword id="KW-0687">Ribonucleoprotein</keyword>
<keyword id="KW-0689">Ribosomal protein</keyword>
<keyword id="KW-0694">RNA-binding</keyword>
<keyword id="KW-0699">rRNA-binding</keyword>
<reference key="1">
    <citation type="submission" date="2003-06" db="EMBL/GenBank/DDBJ databases">
        <title>The complete genome sequence of Haemophilus ducreyi.</title>
        <authorList>
            <person name="Munson R.S. Jr."/>
            <person name="Ray W.C."/>
            <person name="Mahairas G."/>
            <person name="Sabo P."/>
            <person name="Mungur R."/>
            <person name="Johnson L."/>
            <person name="Nguyen D."/>
            <person name="Wang J."/>
            <person name="Forst C."/>
            <person name="Hood L."/>
        </authorList>
    </citation>
    <scope>NUCLEOTIDE SEQUENCE [LARGE SCALE GENOMIC DNA]</scope>
    <source>
        <strain>35000HP / ATCC 700724</strain>
    </source>
</reference>
<reference key="2">
    <citation type="submission" date="1997-06" db="EMBL/GenBank/DDBJ databases">
        <authorList>
            <person name="Waring A.L."/>
            <person name="Parsons L.M."/>
        </authorList>
    </citation>
    <scope>NUCLEOTIDE SEQUENCE [GENOMIC DNA] OF 37-142</scope>
    <source>
        <strain>ATCC 33922 / 35000</strain>
    </source>
</reference>
<comment type="function">
    <text evidence="2">Forms part of the ribosomal stalk which helps the ribosome interact with GTP-bound translation factors.</text>
</comment>
<comment type="subunit">
    <text evidence="2">Part of the ribosomal stalk of the 50S ribosomal subunit. Interacts with L10 and the large rRNA to form the base of the stalk. L10 forms an elongated spine to which L12 dimers bind in a sequential fashion forming a multimeric L10(L12)X complex.</text>
</comment>
<comment type="PTM">
    <text evidence="2">One or more lysine residues are methylated.</text>
</comment>
<comment type="similarity">
    <text evidence="2">Belongs to the universal ribosomal protein uL11 family.</text>
</comment>
<sequence length="142" mass="14962">MAKKVQAYVKLQVAAGMANPSPPVGPALGQQGVNIMEFCKAFNARTESLEKGLPIPVVITVYADRSFTFVTKTPPAAVLLKKAVGIKSGSGKPNKDKVGTVTQEQLRQIAETKAADMTGATIETKMKSIAGTARSMGLIVEE</sequence>
<accession>O32613</accession>
<evidence type="ECO:0000250" key="1"/>
<evidence type="ECO:0000255" key="2">
    <source>
        <dbReference type="HAMAP-Rule" id="MF_00736"/>
    </source>
</evidence>
<evidence type="ECO:0000305" key="3"/>
<proteinExistence type="inferred from homology"/>
<protein>
    <recommendedName>
        <fullName evidence="2">Large ribosomal subunit protein uL11</fullName>
    </recommendedName>
    <alternativeName>
        <fullName evidence="3">50S ribosomal protein L11</fullName>
    </alternativeName>
</protein>
<feature type="initiator methionine" description="Removed" evidence="1">
    <location>
        <position position="1"/>
    </location>
</feature>
<feature type="chain" id="PRO_0000104293" description="Large ribosomal subunit protein uL11">
    <location>
        <begin position="2"/>
        <end position="142"/>
    </location>
</feature>
<feature type="sequence conflict" description="In Ref. 2; AAB63583." evidence="3" ref="2">
    <original>A</original>
    <variation>R</variation>
    <location>
        <position position="83"/>
    </location>
</feature>